<proteinExistence type="inferred from homology"/>
<comment type="function">
    <text>Does not have hemolytic activity but shows a strong cytotoxicity towards alveolar macrophages and neutrophils.</text>
</comment>
<comment type="subcellular location">
    <subcellularLocation>
        <location>Secreted</location>
    </subcellularLocation>
    <subcellularLocation>
        <location evidence="3">Host cell membrane</location>
        <topology evidence="3">Multi-pass membrane protein</topology>
    </subcellularLocation>
</comment>
<comment type="domain">
    <text evidence="1">The Gly-rich region is probably involved in binding calcium, which is required for target cell-binding or cytolytic activity.</text>
</comment>
<comment type="domain">
    <text evidence="1">The three transmembrane domains are believed to be involved in pore formation by the cytotoxin.</text>
</comment>
<comment type="PTM">
    <text evidence="1">Palmitoylated by ApxIIIC. The toxin only becomes active when modified (By similarity).</text>
</comment>
<comment type="similarity">
    <text evidence="3">Belongs to the RTX prokaryotic toxin (TC 1.C.11) family.</text>
</comment>
<accession>P55130</accession>
<reference key="1">
    <citation type="journal article" date="1993" name="DNA Cell Biol.">
        <title>Molecular analysis of the Actinobacillus pleuropneumoniae RTX toxin-III gene cluster.</title>
        <authorList>
            <person name="Chang Y.-F."/>
            <person name="Shi J."/>
            <person name="Ma D.-P."/>
            <person name="Shin S.J."/>
            <person name="Lein D.H."/>
        </authorList>
    </citation>
    <scope>NUCLEOTIDE SEQUENCE [GENOMIC DNA]</scope>
    <source>
        <strain>Serotype 2</strain>
    </source>
</reference>
<reference key="2">
    <citation type="journal article" date="1994" name="Infect. Immun.">
        <title>Genetic map of the Actinobacillus pleuropneumoniae RTX-toxin (Apx) operons: characterization of the ApxIII operons.</title>
        <authorList>
            <person name="Jansen R."/>
            <person name="Briaire J."/>
            <person name="van Geel A.B.M."/>
            <person name="Kamp E.M."/>
            <person name="Gielkens A.L.J."/>
            <person name="Smits M.A."/>
        </authorList>
    </citation>
    <scope>NUCLEOTIDE SEQUENCE [GENOMIC DNA] OF 828-1049</scope>
    <source>
        <strain>1536 / Serotype 2</strain>
    </source>
</reference>
<keyword id="KW-0106">Calcium</keyword>
<keyword id="KW-0204">Cytolysis</keyword>
<keyword id="KW-1032">Host cell membrane</keyword>
<keyword id="KW-1043">Host membrane</keyword>
<keyword id="KW-0449">Lipoprotein</keyword>
<keyword id="KW-0472">Membrane</keyword>
<keyword id="KW-0564">Palmitate</keyword>
<keyword id="KW-0677">Repeat</keyword>
<keyword id="KW-0964">Secreted</keyword>
<keyword id="KW-0800">Toxin</keyword>
<keyword id="KW-0812">Transmembrane</keyword>
<keyword id="KW-1133">Transmembrane helix</keyword>
<keyword id="KW-0843">Virulence</keyword>
<gene>
    <name type="primary">apxIIIA</name>
    <name type="synonym">clyIIIA</name>
    <name type="synonym">ptxA</name>
    <name type="synonym">rtxA</name>
</gene>
<feature type="chain" id="PRO_0000196240" description="RTX-III toxin determinant A from serotype 2">
    <location>
        <begin position="1"/>
        <end position="1049"/>
    </location>
</feature>
<feature type="transmembrane region" description="Helical" evidence="2">
    <location>
        <begin position="154"/>
        <end position="170"/>
    </location>
</feature>
<feature type="transmembrane region" description="Helical" evidence="2">
    <location>
        <begin position="315"/>
        <end position="331"/>
    </location>
</feature>
<feature type="transmembrane region" description="Helical" evidence="2">
    <location>
        <begin position="397"/>
        <end position="413"/>
    </location>
</feature>
<feature type="repeat" description="Hemolysin-type calcium-binding 1">
    <location>
        <begin position="743"/>
        <end position="760"/>
    </location>
</feature>
<feature type="repeat" description="Hemolysin-type calcium-binding 2">
    <location>
        <begin position="761"/>
        <end position="778"/>
    </location>
</feature>
<feature type="repeat" description="Hemolysin-type calcium-binding 3">
    <location>
        <begin position="779"/>
        <end position="796"/>
    </location>
</feature>
<feature type="repeat" description="Hemolysin-type calcium-binding 4">
    <location>
        <begin position="797"/>
        <end position="814"/>
    </location>
</feature>
<feature type="repeat" description="Hemolysin-type calcium-binding 5">
    <location>
        <begin position="825"/>
        <end position="842"/>
    </location>
</feature>
<feature type="repeat" description="Hemolysin-type calcium-binding 6">
    <location>
        <begin position="843"/>
        <end position="860"/>
    </location>
</feature>
<name>RTX31_ACTPL</name>
<evidence type="ECO:0000250" key="1"/>
<evidence type="ECO:0000255" key="2"/>
<evidence type="ECO:0000305" key="3"/>
<protein>
    <recommendedName>
        <fullName>RTX-III toxin determinant A from serotype 2</fullName>
    </recommendedName>
    <alternativeName>
        <fullName>APX-IIIA</fullName>
    </alternativeName>
    <alternativeName>
        <fullName>Cytolysin IIIA</fullName>
        <shortName>CLY-IIIA</shortName>
    </alternativeName>
</protein>
<organism>
    <name type="scientific">Actinobacillus pleuropneumoniae</name>
    <name type="common">Haemophilus pleuropneumoniae</name>
    <dbReference type="NCBI Taxonomy" id="715"/>
    <lineage>
        <taxon>Bacteria</taxon>
        <taxon>Pseudomonadati</taxon>
        <taxon>Pseudomonadota</taxon>
        <taxon>Gammaproteobacteria</taxon>
        <taxon>Pasteurellales</taxon>
        <taxon>Pasteurellaceae</taxon>
        <taxon>Actinobacillus</taxon>
    </lineage>
</organism>
<sequence>MSTWSSMLADLKKRAEEAKRQVKKGYDVTKNGLQYGVSQAKLQALAAGKAVQKYGNKLVLVIPKEYDGSVGNGFFDLVKAAEELGIQVKYVNRNELEVAHKSLGTADQFLGLTERGLTLFAPQLDQFLQKHSKISNVVGSSTGDAVSKLAKSQTIISGIQSVLGTVLAGINLNEAIISGGSELELAEAGVSLASELVSNIAKGTTTIDAFTTQIQNFGKLAENAKGLGGVGRQLQNISGSALSKTGLGLDIISSLLSGVTRSFALRNKNASTSTKVAAGFELSNQVIGGITKAVSSYILAQRLRAGLSTTGPAAALIASSISLAISPLAFLRVADNFNRSKEIGEFAERFKKLGYDGDKLLSEFYHEAGTIDASITTISTALSAIAAGTAAASAGALVGAPITLLVTGITGLISGILEFSKQPMLDHVASKIGNKIDEWEKKYGKNYFENGYDARHKAFLEDSFSLLSSFNKQYETERAVLITQQRWDEYIGELAGITGKGDKLSSGKAYVDYFQEGKLLEKKPDDFSKVVFDPTKGEIDISNSQTSTLLKFVTPLLTPGTESRERTQTGKYEYITKLVVKGKDKWVVNGVKDKGAVYDYTNLIQHAHISSSVARGEEYREVRLVSHLGNGNDKVFLAAGSAEIHAGEGHDVVYYDKTDTGLLVIDGTKATEQGRYSVTRELSGATKILREVIKNQKYAVGKREETLEYRDYELTQSGNSNLKAHDELHSVEEIGSNQRDEFKGSKFRDIFHGADGDDLLNGNDGDDILYGDKGNDELRGDNGNDQLYGGEGDDKLLGGNGNNYLSGGDGNDELQVLGNGFNVLRGGKGDDKLYGSSGSDLLDGGEGNDYLEGGDGSDFYVYRSTSGNHTIYDQGKASDSDKLYLSDLSFDNILVKRVNDNLEFRSNNNSNSGVLTIKDWFKGGNSYNHKIEQIVDKNGRKLTAGNLGNNFHDTQQASSLLKNVTQEQNESNLSSLKTELGKIITNAGNFGVAKQGNTGINTAALNNEVNKIISSANTFATSQLGGSGMGTLPSTNVNSMMLGNLARAA</sequence>
<dbReference type="EMBL" id="L12145">
    <property type="protein sequence ID" value="AAA21924.1"/>
    <property type="molecule type" value="Genomic_DNA"/>
</dbReference>
<dbReference type="EMBL" id="X80056">
    <property type="protein sequence ID" value="CAB37652.1"/>
    <property type="status" value="ALT_SEQ"/>
    <property type="molecule type" value="Genomic_DNA"/>
</dbReference>
<dbReference type="PIR" id="S51784">
    <property type="entry name" value="S51784"/>
</dbReference>
<dbReference type="SMR" id="P55130"/>
<dbReference type="GO" id="GO:0005576">
    <property type="term" value="C:extracellular region"/>
    <property type="evidence" value="ECO:0007669"/>
    <property type="project" value="UniProtKB-SubCell"/>
</dbReference>
<dbReference type="GO" id="GO:0020002">
    <property type="term" value="C:host cell plasma membrane"/>
    <property type="evidence" value="ECO:0007669"/>
    <property type="project" value="UniProtKB-SubCell"/>
</dbReference>
<dbReference type="GO" id="GO:0016020">
    <property type="term" value="C:membrane"/>
    <property type="evidence" value="ECO:0007669"/>
    <property type="project" value="UniProtKB-KW"/>
</dbReference>
<dbReference type="GO" id="GO:0005509">
    <property type="term" value="F:calcium ion binding"/>
    <property type="evidence" value="ECO:0007669"/>
    <property type="project" value="InterPro"/>
</dbReference>
<dbReference type="GO" id="GO:0015267">
    <property type="term" value="F:channel activity"/>
    <property type="evidence" value="ECO:0007669"/>
    <property type="project" value="InterPro"/>
</dbReference>
<dbReference type="GO" id="GO:0090729">
    <property type="term" value="F:toxin activity"/>
    <property type="evidence" value="ECO:0007669"/>
    <property type="project" value="UniProtKB-KW"/>
</dbReference>
<dbReference type="GO" id="GO:0031640">
    <property type="term" value="P:killing of cells of another organism"/>
    <property type="evidence" value="ECO:0007669"/>
    <property type="project" value="UniProtKB-KW"/>
</dbReference>
<dbReference type="Gene3D" id="2.150.10.10">
    <property type="entry name" value="Serralysin-like metalloprotease, C-terminal"/>
    <property type="match status" value="2"/>
</dbReference>
<dbReference type="InterPro" id="IPR018511">
    <property type="entry name" value="Hemolysin-typ_Ca-bd_CS"/>
</dbReference>
<dbReference type="InterPro" id="IPR001343">
    <property type="entry name" value="Hemolysn_Ca-bd"/>
</dbReference>
<dbReference type="InterPro" id="IPR013550">
    <property type="entry name" value="RTX_C"/>
</dbReference>
<dbReference type="InterPro" id="IPR018504">
    <property type="entry name" value="RTX_pore_form"/>
</dbReference>
<dbReference type="InterPro" id="IPR050557">
    <property type="entry name" value="RTX_toxin/Mannuronan_C5-epim"/>
</dbReference>
<dbReference type="InterPro" id="IPR003995">
    <property type="entry name" value="RTX_toxin_determinant-A"/>
</dbReference>
<dbReference type="InterPro" id="IPR011049">
    <property type="entry name" value="Serralysin-like_metalloprot_C"/>
</dbReference>
<dbReference type="NCBIfam" id="NF033943">
    <property type="entry name" value="RTX_toxin"/>
    <property type="match status" value="1"/>
</dbReference>
<dbReference type="PANTHER" id="PTHR38340">
    <property type="entry name" value="S-LAYER PROTEIN"/>
    <property type="match status" value="1"/>
</dbReference>
<dbReference type="PANTHER" id="PTHR38340:SF1">
    <property type="entry name" value="S-LAYER PROTEIN"/>
    <property type="match status" value="1"/>
</dbReference>
<dbReference type="Pfam" id="PF00353">
    <property type="entry name" value="HemolysinCabind"/>
    <property type="match status" value="3"/>
</dbReference>
<dbReference type="Pfam" id="PF02382">
    <property type="entry name" value="RTX"/>
    <property type="match status" value="1"/>
</dbReference>
<dbReference type="Pfam" id="PF08339">
    <property type="entry name" value="RTX_C"/>
    <property type="match status" value="1"/>
</dbReference>
<dbReference type="PRINTS" id="PR00313">
    <property type="entry name" value="CABNDNGRPT"/>
</dbReference>
<dbReference type="PRINTS" id="PR01488">
    <property type="entry name" value="RTXTOXINA"/>
</dbReference>
<dbReference type="SUPFAM" id="SSF51120">
    <property type="entry name" value="beta-Roll"/>
    <property type="match status" value="1"/>
</dbReference>
<dbReference type="PROSITE" id="PS00330">
    <property type="entry name" value="HEMOLYSIN_CALCIUM"/>
    <property type="match status" value="3"/>
</dbReference>